<reference key="1">
    <citation type="journal article" date="1993" name="Genetics">
        <title>Molecular characterization of duplicate cytosolic phosphoglucose isomerase genes in Clarkia and comparison to the single gene in Arabidopsis.</title>
        <authorList>
            <person name="Thomas B.R."/>
            <person name="Ford V.S."/>
            <person name="Pichersky E."/>
            <person name="Gottlieb L.D."/>
        </authorList>
    </citation>
    <scope>NUCLEOTIDE SEQUENCE [GENOMIC DNA]</scope>
</reference>
<reference key="2">
    <citation type="journal article" date="1996" name="Syst. Bot.">
        <title>Phylogenetic relationships among the sections of Clarkia (Onagraceae) inferred from the nucleotide sequences of PgiC.</title>
        <authorList>
            <person name="Gottlieb L.D."/>
            <person name="Ford V.S."/>
        </authorList>
        <dbReference type="AGRICOLA" id="IND20535960"/>
    </citation>
    <scope>NUCLEOTIDE SEQUENCE [GENOMIC DNA]</scope>
    <source>
        <strain>Population LDG 795</strain>
    </source>
</reference>
<sequence length="569" mass="62689">MASPALISETEAWKDLKAHLEGIKMTHLRELMGDTERCQSMMVEFDNIFLDYSRQQASPDTISKLYKLADAAHLKQKIDRMYNGDHINTTENRSVLHVALRAPRNSAICSDGKNVVPDVWNVLDKIKDFSDSVRNGSWIGATGKELKDVIAVGIGGSFLGPLFVHTALQTDPEASKNARGRELRFLANVDPIDVARNISGLNPETTLVVVVSKTFTTAETMLNARTLREWISSALGPSAVAKHMVAVSTNLPLVEKFGIDPNNAFAFWDWVGGRYSVCSAVGVLPLSLQYGFAVVEKFLQGAHSIDQHFSSAPFEKNIPVLLGLLSVWNVSFLGYPARAILPYSQALEKLAPHIQQVSMESNGKGVSIDGLPLPFESGEIDFGEPGTNGQHSFYQLIHQGRVIPCDFIGVVKSQQPVYLKGEVVNNHDELMSNFFAQPDALAYGKTPEELKKENVSEHLIPHKTFTGNRPSISILLPTLDAYRIGQLLAIYEHRVAVQGFVWGINSFDQWGVELGKSLATQVRKQLHGSRVKGEPVEEGFNFSTKTLLTRYLQATSDVPADPSTLLPNI</sequence>
<evidence type="ECO:0000250" key="1"/>
<evidence type="ECO:0000305" key="2"/>
<dbReference type="EC" id="5.3.1.9"/>
<dbReference type="EMBL" id="X71084">
    <property type="protein sequence ID" value="CAA50402.1"/>
    <property type="molecule type" value="Genomic_DNA"/>
</dbReference>
<dbReference type="EMBL" id="X89384">
    <property type="protein sequence ID" value="CAA61564.1"/>
    <property type="molecule type" value="Genomic_DNA"/>
</dbReference>
<dbReference type="PIR" id="S41806">
    <property type="entry name" value="S41806"/>
</dbReference>
<dbReference type="SMR" id="P34796"/>
<dbReference type="UniPathway" id="UPA00109">
    <property type="reaction ID" value="UER00181"/>
</dbReference>
<dbReference type="GO" id="GO:0005829">
    <property type="term" value="C:cytosol"/>
    <property type="evidence" value="ECO:0007669"/>
    <property type="project" value="TreeGrafter"/>
</dbReference>
<dbReference type="GO" id="GO:0097367">
    <property type="term" value="F:carbohydrate derivative binding"/>
    <property type="evidence" value="ECO:0007669"/>
    <property type="project" value="InterPro"/>
</dbReference>
<dbReference type="GO" id="GO:0004347">
    <property type="term" value="F:glucose-6-phosphate isomerase activity"/>
    <property type="evidence" value="ECO:0007669"/>
    <property type="project" value="UniProtKB-EC"/>
</dbReference>
<dbReference type="GO" id="GO:0048029">
    <property type="term" value="F:monosaccharide binding"/>
    <property type="evidence" value="ECO:0007669"/>
    <property type="project" value="TreeGrafter"/>
</dbReference>
<dbReference type="GO" id="GO:0006094">
    <property type="term" value="P:gluconeogenesis"/>
    <property type="evidence" value="ECO:0007669"/>
    <property type="project" value="UniProtKB-KW"/>
</dbReference>
<dbReference type="GO" id="GO:0051156">
    <property type="term" value="P:glucose 6-phosphate metabolic process"/>
    <property type="evidence" value="ECO:0007669"/>
    <property type="project" value="TreeGrafter"/>
</dbReference>
<dbReference type="GO" id="GO:0006096">
    <property type="term" value="P:glycolytic process"/>
    <property type="evidence" value="ECO:0007669"/>
    <property type="project" value="UniProtKB-UniPathway"/>
</dbReference>
<dbReference type="CDD" id="cd05015">
    <property type="entry name" value="SIS_PGI_1"/>
    <property type="match status" value="1"/>
</dbReference>
<dbReference type="CDD" id="cd05016">
    <property type="entry name" value="SIS_PGI_2"/>
    <property type="match status" value="1"/>
</dbReference>
<dbReference type="FunFam" id="1.10.1390.10:FF:000002">
    <property type="entry name" value="Glucose-6-phosphate isomerase"/>
    <property type="match status" value="1"/>
</dbReference>
<dbReference type="FunFam" id="3.40.50.10490:FF:000018">
    <property type="entry name" value="Glucose-6-phosphate isomerase"/>
    <property type="match status" value="1"/>
</dbReference>
<dbReference type="FunFam" id="3.40.50.10490:FF:000031">
    <property type="entry name" value="Glucose-6-phosphate isomerase"/>
    <property type="match status" value="1"/>
</dbReference>
<dbReference type="FunFam" id="3.40.50.10490:FF:000048">
    <property type="entry name" value="Glucose-6-phosphate isomerase"/>
    <property type="match status" value="1"/>
</dbReference>
<dbReference type="Gene3D" id="1.10.1390.10">
    <property type="match status" value="1"/>
</dbReference>
<dbReference type="Gene3D" id="3.40.50.10490">
    <property type="entry name" value="Glucose-6-phosphate isomerase like protein, domain 1"/>
    <property type="match status" value="2"/>
</dbReference>
<dbReference type="HAMAP" id="MF_00473">
    <property type="entry name" value="G6P_isomerase"/>
    <property type="match status" value="1"/>
</dbReference>
<dbReference type="InterPro" id="IPR001672">
    <property type="entry name" value="G6P_Isomerase"/>
</dbReference>
<dbReference type="InterPro" id="IPR023096">
    <property type="entry name" value="G6P_Isomerase_C"/>
</dbReference>
<dbReference type="InterPro" id="IPR018189">
    <property type="entry name" value="Phosphoglucose_isomerase_CS"/>
</dbReference>
<dbReference type="InterPro" id="IPR046348">
    <property type="entry name" value="SIS_dom_sf"/>
</dbReference>
<dbReference type="InterPro" id="IPR035476">
    <property type="entry name" value="SIS_PGI_1"/>
</dbReference>
<dbReference type="InterPro" id="IPR035482">
    <property type="entry name" value="SIS_PGI_2"/>
</dbReference>
<dbReference type="NCBIfam" id="NF001211">
    <property type="entry name" value="PRK00179.1"/>
    <property type="match status" value="1"/>
</dbReference>
<dbReference type="PANTHER" id="PTHR11469">
    <property type="entry name" value="GLUCOSE-6-PHOSPHATE ISOMERASE"/>
    <property type="match status" value="1"/>
</dbReference>
<dbReference type="PANTHER" id="PTHR11469:SF1">
    <property type="entry name" value="GLUCOSE-6-PHOSPHATE ISOMERASE"/>
    <property type="match status" value="1"/>
</dbReference>
<dbReference type="Pfam" id="PF00342">
    <property type="entry name" value="PGI"/>
    <property type="match status" value="1"/>
</dbReference>
<dbReference type="PRINTS" id="PR00662">
    <property type="entry name" value="G6PISOMERASE"/>
</dbReference>
<dbReference type="SUPFAM" id="SSF53697">
    <property type="entry name" value="SIS domain"/>
    <property type="match status" value="1"/>
</dbReference>
<dbReference type="PROSITE" id="PS00765">
    <property type="entry name" value="P_GLUCOSE_ISOMERASE_1"/>
    <property type="match status" value="1"/>
</dbReference>
<dbReference type="PROSITE" id="PS00174">
    <property type="entry name" value="P_GLUCOSE_ISOMERASE_2"/>
    <property type="match status" value="1"/>
</dbReference>
<dbReference type="PROSITE" id="PS51463">
    <property type="entry name" value="P_GLUCOSE_ISOMERASE_3"/>
    <property type="match status" value="1"/>
</dbReference>
<proteinExistence type="inferred from homology"/>
<comment type="catalytic activity">
    <reaction>
        <text>alpha-D-glucose 6-phosphate = beta-D-fructose 6-phosphate</text>
        <dbReference type="Rhea" id="RHEA:11816"/>
        <dbReference type="ChEBI" id="CHEBI:57634"/>
        <dbReference type="ChEBI" id="CHEBI:58225"/>
        <dbReference type="EC" id="5.3.1.9"/>
    </reaction>
</comment>
<comment type="pathway">
    <text>Carbohydrate degradation; glycolysis; D-glyceraldehyde 3-phosphate and glycerone phosphate from D-glucose: step 2/4.</text>
</comment>
<comment type="subunit">
    <text evidence="1">Homodimer.</text>
</comment>
<comment type="subcellular location">
    <subcellularLocation>
        <location>Cytoplasm</location>
    </subcellularLocation>
</comment>
<comment type="similarity">
    <text evidence="2">Belongs to the GPI family.</text>
</comment>
<protein>
    <recommendedName>
        <fullName>Glucose-6-phosphate isomerase, cytosolic 1A</fullName>
        <shortName>GPI</shortName>
        <ecNumber>5.3.1.9</ecNumber>
    </recommendedName>
    <alternativeName>
        <fullName>PGI2</fullName>
        <shortName>PGI</shortName>
    </alternativeName>
    <alternativeName>
        <fullName>Phosphoglucose isomerase</fullName>
    </alternativeName>
    <alternativeName>
        <fullName>Phosphohexose isomerase</fullName>
        <shortName>PHI</shortName>
    </alternativeName>
</protein>
<keyword id="KW-0963">Cytoplasm</keyword>
<keyword id="KW-0312">Gluconeogenesis</keyword>
<keyword id="KW-0324">Glycolysis</keyword>
<keyword id="KW-0413">Isomerase</keyword>
<gene>
    <name type="primary">PGIC1-A</name>
</gene>
<name>G6PI1_CLALE</name>
<feature type="chain" id="PRO_0000180555" description="Glucose-6-phosphate isomerase, cytosolic 1A">
    <location>
        <begin position="1"/>
        <end position="569"/>
    </location>
</feature>
<feature type="active site" description="Proton donor" evidence="1">
    <location>
        <position position="360"/>
    </location>
</feature>
<feature type="active site" evidence="1">
    <location>
        <position position="391"/>
    </location>
</feature>
<feature type="active site" evidence="1">
    <location>
        <position position="516"/>
    </location>
</feature>
<accession>P34796</accession>
<organism>
    <name type="scientific">Clarkia lewisii</name>
    <name type="common">Farewell-to-spring</name>
    <name type="synonym">Clarkia bottae</name>
    <dbReference type="NCBI Taxonomy" id="3936"/>
    <lineage>
        <taxon>Eukaryota</taxon>
        <taxon>Viridiplantae</taxon>
        <taxon>Streptophyta</taxon>
        <taxon>Embryophyta</taxon>
        <taxon>Tracheophyta</taxon>
        <taxon>Spermatophyta</taxon>
        <taxon>Magnoliopsida</taxon>
        <taxon>eudicotyledons</taxon>
        <taxon>Gunneridae</taxon>
        <taxon>Pentapetalae</taxon>
        <taxon>rosids</taxon>
        <taxon>malvids</taxon>
        <taxon>Myrtales</taxon>
        <taxon>Onagraceae</taxon>
        <taxon>Onagroideae</taxon>
        <taxon>Onagreae</taxon>
        <taxon>Clarkia</taxon>
    </lineage>
</organism>